<evidence type="ECO:0000250" key="1"/>
<evidence type="ECO:0000250" key="2">
    <source>
        <dbReference type="UniProtKB" id="Q9GZZ1"/>
    </source>
</evidence>
<evidence type="ECO:0000255" key="3">
    <source>
        <dbReference type="PROSITE-ProRule" id="PRU00532"/>
    </source>
</evidence>
<evidence type="ECO:0000305" key="4"/>
<accession>Q5XGA9</accession>
<dbReference type="EC" id="2.3.1.258" evidence="2"/>
<dbReference type="EC" id="2.3.1.-" evidence="2"/>
<dbReference type="EMBL" id="BC084533">
    <property type="protein sequence ID" value="AAH84533.1"/>
    <property type="molecule type" value="mRNA"/>
</dbReference>
<dbReference type="RefSeq" id="NP_001011131.1">
    <property type="nucleotide sequence ID" value="NM_001011131.1"/>
</dbReference>
<dbReference type="SMR" id="Q5XGA9"/>
<dbReference type="FunCoup" id="Q5XGA9">
    <property type="interactions" value="3267"/>
</dbReference>
<dbReference type="STRING" id="8364.ENSXETP00000016345"/>
<dbReference type="PaxDb" id="8364-ENSXETP00000021826"/>
<dbReference type="GeneID" id="496547"/>
<dbReference type="KEGG" id="xtr:496547"/>
<dbReference type="AGR" id="Xenbase:XB-GENE-996002"/>
<dbReference type="CTD" id="80218"/>
<dbReference type="Xenbase" id="XB-GENE-996002">
    <property type="gene designation" value="naa50"/>
</dbReference>
<dbReference type="eggNOG" id="KOG3138">
    <property type="taxonomic scope" value="Eukaryota"/>
</dbReference>
<dbReference type="InParanoid" id="Q5XGA9"/>
<dbReference type="OrthoDB" id="47374at2759"/>
<dbReference type="Proteomes" id="UP000008143">
    <property type="component" value="Chromosome 2"/>
</dbReference>
<dbReference type="GO" id="GO:0005737">
    <property type="term" value="C:cytoplasm"/>
    <property type="evidence" value="ECO:0000250"/>
    <property type="project" value="UniProtKB"/>
</dbReference>
<dbReference type="GO" id="GO:0005829">
    <property type="term" value="C:cytosol"/>
    <property type="evidence" value="ECO:0000250"/>
    <property type="project" value="UniProtKB"/>
</dbReference>
<dbReference type="GO" id="GO:0005634">
    <property type="term" value="C:nucleus"/>
    <property type="evidence" value="ECO:0000250"/>
    <property type="project" value="UniProtKB"/>
</dbReference>
<dbReference type="GO" id="GO:0010485">
    <property type="term" value="F:histone H4 acetyltransferase activity"/>
    <property type="evidence" value="ECO:0000250"/>
    <property type="project" value="UniProtKB"/>
</dbReference>
<dbReference type="GO" id="GO:0120518">
    <property type="term" value="F:protein N-terminal-methionine acetyltransferase activity"/>
    <property type="evidence" value="ECO:0007669"/>
    <property type="project" value="UniProtKB-EC"/>
</dbReference>
<dbReference type="GO" id="GO:0061733">
    <property type="term" value="F:protein-lysine-acetyltransferase activity"/>
    <property type="evidence" value="ECO:0000250"/>
    <property type="project" value="UniProtKB"/>
</dbReference>
<dbReference type="GO" id="GO:0004596">
    <property type="term" value="F:protein-N-terminal amino-acid acetyltransferase activity"/>
    <property type="evidence" value="ECO:0000250"/>
    <property type="project" value="UniProtKB"/>
</dbReference>
<dbReference type="GO" id="GO:0034087">
    <property type="term" value="P:establishment of mitotic sister chromatid cohesion"/>
    <property type="evidence" value="ECO:0000250"/>
    <property type="project" value="UniProtKB"/>
</dbReference>
<dbReference type="GO" id="GO:0071962">
    <property type="term" value="P:mitotic sister chromatid cohesion, centromeric"/>
    <property type="evidence" value="ECO:0000250"/>
    <property type="project" value="UniProtKB"/>
</dbReference>
<dbReference type="GO" id="GO:0006474">
    <property type="term" value="P:N-terminal protein amino acid acetylation"/>
    <property type="evidence" value="ECO:0000250"/>
    <property type="project" value="UniProtKB"/>
</dbReference>
<dbReference type="CDD" id="cd04301">
    <property type="entry name" value="NAT_SF"/>
    <property type="match status" value="1"/>
</dbReference>
<dbReference type="FunFam" id="3.40.630.30:FF:000078">
    <property type="entry name" value="N-alpha-acetyltransferase 50"/>
    <property type="match status" value="1"/>
</dbReference>
<dbReference type="Gene3D" id="3.40.630.30">
    <property type="match status" value="1"/>
</dbReference>
<dbReference type="InterPro" id="IPR016181">
    <property type="entry name" value="Acyl_CoA_acyltransferase"/>
</dbReference>
<dbReference type="InterPro" id="IPR000182">
    <property type="entry name" value="GNAT_dom"/>
</dbReference>
<dbReference type="InterPro" id="IPR051556">
    <property type="entry name" value="N-term/lysine_N-AcTrnsfr"/>
</dbReference>
<dbReference type="PANTHER" id="PTHR42919">
    <property type="entry name" value="N-ALPHA-ACETYLTRANSFERASE"/>
    <property type="match status" value="1"/>
</dbReference>
<dbReference type="PANTHER" id="PTHR42919:SF41">
    <property type="entry name" value="N-ALPHA-ACETYLTRANSFERASE 50"/>
    <property type="match status" value="1"/>
</dbReference>
<dbReference type="Pfam" id="PF00583">
    <property type="entry name" value="Acetyltransf_1"/>
    <property type="match status" value="1"/>
</dbReference>
<dbReference type="SUPFAM" id="SSF55729">
    <property type="entry name" value="Acyl-CoA N-acyltransferases (Nat)"/>
    <property type="match status" value="1"/>
</dbReference>
<dbReference type="PROSITE" id="PS51186">
    <property type="entry name" value="GNAT"/>
    <property type="match status" value="1"/>
</dbReference>
<organism>
    <name type="scientific">Xenopus tropicalis</name>
    <name type="common">Western clawed frog</name>
    <name type="synonym">Silurana tropicalis</name>
    <dbReference type="NCBI Taxonomy" id="8364"/>
    <lineage>
        <taxon>Eukaryota</taxon>
        <taxon>Metazoa</taxon>
        <taxon>Chordata</taxon>
        <taxon>Craniata</taxon>
        <taxon>Vertebrata</taxon>
        <taxon>Euteleostomi</taxon>
        <taxon>Amphibia</taxon>
        <taxon>Batrachia</taxon>
        <taxon>Anura</taxon>
        <taxon>Pipoidea</taxon>
        <taxon>Pipidae</taxon>
        <taxon>Xenopodinae</taxon>
        <taxon>Xenopus</taxon>
        <taxon>Silurana</taxon>
    </lineage>
</organism>
<gene>
    <name type="primary">naa50</name>
    <name type="synonym">nat13</name>
</gene>
<proteinExistence type="evidence at transcript level"/>
<feature type="chain" id="PRO_0000284907" description="N-alpha-acetyltransferase 50">
    <location>
        <begin position="1"/>
        <end position="169"/>
    </location>
</feature>
<feature type="domain" description="N-acetyltransferase" evidence="3">
    <location>
        <begin position="5"/>
        <end position="154"/>
    </location>
</feature>
<feature type="region of interest" description="Substrate" evidence="2">
    <location>
        <begin position="137"/>
        <end position="140"/>
    </location>
</feature>
<feature type="active site" evidence="2">
    <location>
        <position position="72"/>
    </location>
</feature>
<feature type="active site" evidence="2">
    <location>
        <position position="111"/>
    </location>
</feature>
<feature type="binding site" evidence="2">
    <location>
        <position position="30"/>
    </location>
    <ligand>
        <name>substrate</name>
    </ligand>
</feature>
<feature type="binding site" evidence="2">
    <location>
        <position position="74"/>
    </location>
    <ligand>
        <name>substrate</name>
    </ligand>
</feature>
<feature type="binding site" evidence="2">
    <location>
        <begin position="76"/>
        <end position="89"/>
    </location>
    <ligand>
        <name>acetyl-CoA</name>
        <dbReference type="ChEBI" id="CHEBI:57288"/>
    </ligand>
</feature>
<feature type="binding site" evidence="1">
    <location>
        <begin position="78"/>
        <end position="89"/>
    </location>
    <ligand>
        <name>CoA</name>
        <dbReference type="ChEBI" id="CHEBI:57287"/>
    </ligand>
</feature>
<feature type="binding site" evidence="2">
    <location>
        <begin position="116"/>
        <end position="125"/>
    </location>
    <ligand>
        <name>CoA</name>
        <dbReference type="ChEBI" id="CHEBI:57287"/>
    </ligand>
</feature>
<name>NAA50_XENTR</name>
<protein>
    <recommendedName>
        <fullName>N-alpha-acetyltransferase 50</fullName>
        <ecNumber evidence="2">2.3.1.258</ecNumber>
    </recommendedName>
    <alternativeName>
        <fullName>N-acetyltransferase NAT13</fullName>
    </alternativeName>
    <alternativeName>
        <fullName evidence="2">N-epsilon-acetyltransferase 50</fullName>
        <ecNumber evidence="2">2.3.1.-</ecNumber>
    </alternativeName>
    <alternativeName>
        <fullName>NatE catalytic subunit</fullName>
    </alternativeName>
</protein>
<keyword id="KW-0012">Acyltransferase</keyword>
<keyword id="KW-0963">Cytoplasm</keyword>
<keyword id="KW-0539">Nucleus</keyword>
<keyword id="KW-1185">Reference proteome</keyword>
<keyword id="KW-0808">Transferase</keyword>
<sequence length="169" mass="19412">MKGRIELGDVTPHNIKQLKRLNQVIFPVSYNDKFYKDVLEVGELAKLAYFNDIAVGAVCCRVDHSQNQKRLYIMTLGCLAPYRRLGIGTKMLNHVLNICEKDGTFDNIYLHVQISNESAIDFYRKFGFEIIETKKNYYKRIEPADAHVLQKNLKISSPGQNADVQKSEN</sequence>
<comment type="function">
    <text evidence="2">N-alpha-acetyltransferase that acetylates the N-terminus of proteins that retain their initiating methionine. Has a broad substrate specificity: able to acetylate the initiator methionine of most peptides, except for those with a proline in second position. Also displays N-epsilon-acetyltransferase activity by mediating acetylation of the side chain of specific lysines on proteins. The relevance of N-epsilon-acetyltransferase activity is however unclear. Required for sister chromatid cohesion during mitosis by promoting binding of CDCA5/sororin to cohesin.</text>
</comment>
<comment type="catalytic activity">
    <reaction evidence="2">
        <text>N-terminal L-methionyl-L-alanyl-[protein] + acetyl-CoA = N-terminal N(alpha)-acetyl-L-methionyl-L-alanyl-[protein] + CoA + H(+)</text>
        <dbReference type="Rhea" id="RHEA:50564"/>
        <dbReference type="Rhea" id="RHEA-COMP:12726"/>
        <dbReference type="Rhea" id="RHEA-COMP:12727"/>
        <dbReference type="ChEBI" id="CHEBI:15378"/>
        <dbReference type="ChEBI" id="CHEBI:57287"/>
        <dbReference type="ChEBI" id="CHEBI:57288"/>
        <dbReference type="ChEBI" id="CHEBI:133398"/>
        <dbReference type="ChEBI" id="CHEBI:133399"/>
        <dbReference type="EC" id="2.3.1.258"/>
    </reaction>
</comment>
<comment type="catalytic activity">
    <reaction evidence="2">
        <text>N-terminal L-methionyl-L-seryl-[protein] + acetyl-CoA = N-terminal N(alpha)-acetyl-L-methionyl-L-seryl-[protein] + CoA + H(+)</text>
        <dbReference type="Rhea" id="RHEA:50568"/>
        <dbReference type="Rhea" id="RHEA-COMP:12728"/>
        <dbReference type="Rhea" id="RHEA-COMP:12729"/>
        <dbReference type="ChEBI" id="CHEBI:15378"/>
        <dbReference type="ChEBI" id="CHEBI:57287"/>
        <dbReference type="ChEBI" id="CHEBI:57288"/>
        <dbReference type="ChEBI" id="CHEBI:133400"/>
        <dbReference type="ChEBI" id="CHEBI:133401"/>
        <dbReference type="EC" id="2.3.1.258"/>
    </reaction>
</comment>
<comment type="catalytic activity">
    <reaction evidence="2">
        <text>N-terminal L-methionyl-L-valyl-[protein] + acetyl-CoA = N-terminal N(alpha)-acetyl-L-methionyl-L-valyl-[protein] + CoA + H(+)</text>
        <dbReference type="Rhea" id="RHEA:50572"/>
        <dbReference type="Rhea" id="RHEA-COMP:12730"/>
        <dbReference type="Rhea" id="RHEA-COMP:12731"/>
        <dbReference type="ChEBI" id="CHEBI:15378"/>
        <dbReference type="ChEBI" id="CHEBI:57287"/>
        <dbReference type="ChEBI" id="CHEBI:57288"/>
        <dbReference type="ChEBI" id="CHEBI:133402"/>
        <dbReference type="ChEBI" id="CHEBI:133403"/>
        <dbReference type="EC" id="2.3.1.258"/>
    </reaction>
</comment>
<comment type="catalytic activity">
    <reaction evidence="2">
        <text>N-terminal L-methionyl-L-threonyl-[protein] + acetyl-CoA = N-terminal N(alpha)-acetyl-L-methionyl-L-threonyl-[protein] + CoA + H(+)</text>
        <dbReference type="Rhea" id="RHEA:50576"/>
        <dbReference type="Rhea" id="RHEA-COMP:12732"/>
        <dbReference type="Rhea" id="RHEA-COMP:12733"/>
        <dbReference type="ChEBI" id="CHEBI:15378"/>
        <dbReference type="ChEBI" id="CHEBI:57287"/>
        <dbReference type="ChEBI" id="CHEBI:57288"/>
        <dbReference type="ChEBI" id="CHEBI:133404"/>
        <dbReference type="ChEBI" id="CHEBI:133405"/>
        <dbReference type="EC" id="2.3.1.258"/>
    </reaction>
</comment>
<comment type="catalytic activity">
    <reaction evidence="2">
        <text>N-terminal L-methionyl-L-lysyl-[protein] + acetyl-CoA = N-terminal N(alpha)-acetyl-L-methionyl-L-lysyl-[protein] + CoA + H(+)</text>
        <dbReference type="Rhea" id="RHEA:50580"/>
        <dbReference type="Rhea" id="RHEA-COMP:12734"/>
        <dbReference type="Rhea" id="RHEA-COMP:12735"/>
        <dbReference type="ChEBI" id="CHEBI:15378"/>
        <dbReference type="ChEBI" id="CHEBI:57287"/>
        <dbReference type="ChEBI" id="CHEBI:57288"/>
        <dbReference type="ChEBI" id="CHEBI:133406"/>
        <dbReference type="ChEBI" id="CHEBI:133407"/>
        <dbReference type="EC" id="2.3.1.258"/>
    </reaction>
</comment>
<comment type="catalytic activity">
    <reaction evidence="2">
        <text>N-terminal L-methionyl-L-leucyl-[protein] + acetyl-CoA = N-terminal N(alpha)-acetyl-L-methionyl-L-leucyl-[protein] + CoA + H(+)</text>
        <dbReference type="Rhea" id="RHEA:50520"/>
        <dbReference type="Rhea" id="RHEA-COMP:12711"/>
        <dbReference type="Rhea" id="RHEA-COMP:12712"/>
        <dbReference type="ChEBI" id="CHEBI:15378"/>
        <dbReference type="ChEBI" id="CHEBI:57287"/>
        <dbReference type="ChEBI" id="CHEBI:57288"/>
        <dbReference type="ChEBI" id="CHEBI:133377"/>
        <dbReference type="ChEBI" id="CHEBI:133378"/>
        <dbReference type="EC" id="2.3.1.258"/>
    </reaction>
</comment>
<comment type="catalytic activity">
    <reaction evidence="2">
        <text>N-terminal L-methionyl-L-phenylalanyl-[protein] + acetyl-CoA = N-terminal N(alpha)-acetyl-L-methionyl-L-phenylalanyl-[protein] + CoA + H(+)</text>
        <dbReference type="Rhea" id="RHEA:50528"/>
        <dbReference type="Rhea" id="RHEA-COMP:12715"/>
        <dbReference type="Rhea" id="RHEA-COMP:12716"/>
        <dbReference type="ChEBI" id="CHEBI:15378"/>
        <dbReference type="ChEBI" id="CHEBI:57287"/>
        <dbReference type="ChEBI" id="CHEBI:57288"/>
        <dbReference type="ChEBI" id="CHEBI:133382"/>
        <dbReference type="ChEBI" id="CHEBI:133383"/>
        <dbReference type="EC" id="2.3.1.258"/>
    </reaction>
</comment>
<comment type="catalytic activity">
    <reaction evidence="2">
        <text>N-terminal L-methionyl-L-tyrosyl-[protein] + acetyl-CoA = N-terminal N(alpha)-acetyl-L-methionyl-L-tyrosyl-[protein] + CoA + H(+)</text>
        <dbReference type="Rhea" id="RHEA:50532"/>
        <dbReference type="Rhea" id="RHEA-COMP:12717"/>
        <dbReference type="Rhea" id="RHEA-COMP:12718"/>
        <dbReference type="ChEBI" id="CHEBI:15378"/>
        <dbReference type="ChEBI" id="CHEBI:57287"/>
        <dbReference type="ChEBI" id="CHEBI:57288"/>
        <dbReference type="ChEBI" id="CHEBI:133384"/>
        <dbReference type="ChEBI" id="CHEBI:133385"/>
        <dbReference type="EC" id="2.3.1.258"/>
    </reaction>
</comment>
<comment type="subcellular location">
    <subcellularLocation>
        <location evidence="2">Cytoplasm</location>
    </subcellularLocation>
    <subcellularLocation>
        <location evidence="2">Nucleus</location>
    </subcellularLocation>
    <text evidence="2">Localizes to the cytoplasm in interphase cells.</text>
</comment>
<comment type="similarity">
    <text evidence="4">Belongs to the acetyltransferase family. GNAT subfamily.</text>
</comment>
<reference key="1">
    <citation type="submission" date="2004-10" db="EMBL/GenBank/DDBJ databases">
        <authorList>
            <consortium name="NIH - Xenopus Gene Collection (XGC) project"/>
        </authorList>
    </citation>
    <scope>NUCLEOTIDE SEQUENCE [LARGE SCALE MRNA]</scope>
    <source>
        <tissue>Embryo</tissue>
    </source>
</reference>